<feature type="chain" id="PRO_0000061865" description="Cytochrome b6-f complex subunit 4">
    <location>
        <begin position="1"/>
        <end position="160"/>
    </location>
</feature>
<feature type="transmembrane region" description="Helical" evidence="2">
    <location>
        <begin position="36"/>
        <end position="56"/>
    </location>
</feature>
<feature type="transmembrane region" description="Helical" evidence="2">
    <location>
        <begin position="95"/>
        <end position="115"/>
    </location>
</feature>
<feature type="transmembrane region" description="Helical" evidence="2">
    <location>
        <begin position="131"/>
        <end position="151"/>
    </location>
</feature>
<feature type="splice variant" id="VSP_019382" description="In isoform Long." evidence="3">
    <original>MGV</original>
    <variation>MSGSSGGWIYKNSPIPI</variation>
    <location>
        <begin position="1"/>
        <end position="3"/>
    </location>
</feature>
<sequence length="160" mass="17459">MGVTKKPDLNDPVLRAKLAKGMGHNYYGEPAWPNDLLYIFPVVILGTIACNVGLAVLEPSMIGEPADPFATPLEILPEWYFFPVFQILRTVPNKLLGVLLMVSVPAGLLTVPFLENVNKFQNPFRRPVATTVFLIGTAVALWLGIGATLPIDKSLTLGLF</sequence>
<proteinExistence type="inferred from homology"/>
<evidence type="ECO:0000250" key="1"/>
<evidence type="ECO:0000255" key="2">
    <source>
        <dbReference type="HAMAP-Rule" id="MF_01344"/>
    </source>
</evidence>
<evidence type="ECO:0000305" key="3"/>
<accession>Q332U6</accession>
<accession>Q1KXJ1</accession>
<organism>
    <name type="scientific">Lactuca sativa</name>
    <name type="common">Garden lettuce</name>
    <dbReference type="NCBI Taxonomy" id="4236"/>
    <lineage>
        <taxon>Eukaryota</taxon>
        <taxon>Viridiplantae</taxon>
        <taxon>Streptophyta</taxon>
        <taxon>Embryophyta</taxon>
        <taxon>Tracheophyta</taxon>
        <taxon>Spermatophyta</taxon>
        <taxon>Magnoliopsida</taxon>
        <taxon>eudicotyledons</taxon>
        <taxon>Gunneridae</taxon>
        <taxon>Pentapetalae</taxon>
        <taxon>asterids</taxon>
        <taxon>campanulids</taxon>
        <taxon>Asterales</taxon>
        <taxon>Asteraceae</taxon>
        <taxon>Cichorioideae</taxon>
        <taxon>Cichorieae</taxon>
        <taxon>Lactucinae</taxon>
        <taxon>Lactuca</taxon>
    </lineage>
</organism>
<protein>
    <recommendedName>
        <fullName evidence="2">Cytochrome b6-f complex subunit 4</fullName>
    </recommendedName>
    <alternativeName>
        <fullName evidence="2">17 kDa polypeptide</fullName>
    </alternativeName>
</protein>
<reference key="1">
    <citation type="journal article" date="2006" name="Transgenic Res.">
        <title>Efficient and stable transformation of Lactuca sativa L. cv. Cisco (lettuce) plastids.</title>
        <authorList>
            <person name="Kanamoto H."/>
            <person name="Yamashita A."/>
            <person name="Asao H."/>
            <person name="Okumura S."/>
            <person name="Takase H."/>
            <person name="Hattori M."/>
            <person name="Yokota A."/>
            <person name="Tomizawa K."/>
        </authorList>
    </citation>
    <scope>NUCLEOTIDE SEQUENCE [LARGE SCALE GENOMIC DNA]</scope>
    <source>
        <strain>cv. Cisco</strain>
    </source>
</reference>
<reference key="2">
    <citation type="submission" date="2006-01" db="EMBL/GenBank/DDBJ databases">
        <title>A comparison of the first two published chloroplast genomes in Asteraceae: Lactuca and Helianthus.</title>
        <authorList>
            <person name="Timme R.E."/>
            <person name="Kuehl J.V."/>
            <person name="Boore J.L."/>
            <person name="Jansen R.K."/>
        </authorList>
    </citation>
    <scope>NUCLEOTIDE SEQUENCE [LARGE SCALE GENOMIC DNA]</scope>
    <source>
        <strain>cv. Salinas</strain>
    </source>
</reference>
<comment type="function">
    <text evidence="2">Component of the cytochrome b6-f complex, which mediates electron transfer between photosystem II (PSII) and photosystem I (PSI), cyclic electron flow around PSI, and state transitions.</text>
</comment>
<comment type="subunit">
    <text evidence="1">The 4 large subunits of the cytochrome b6-f complex are cytochrome b6, subunit IV (17 kDa polypeptide, petD), cytochrome f and the Rieske protein, while the 4 small subunits are petG, petL, petM and petN. The complex functions as a dimer (By similarity).</text>
</comment>
<comment type="subcellular location">
    <subcellularLocation>
        <location evidence="2">Plastid</location>
        <location evidence="2">Chloroplast thylakoid membrane</location>
        <topology evidence="2">Multi-pass membrane protein</topology>
    </subcellularLocation>
</comment>
<comment type="alternative products">
    <event type="alternative splicing"/>
    <isoform>
        <id>Q332U6-1</id>
        <name>Short</name>
        <sequence type="displayed"/>
    </isoform>
    <isoform>
        <id>Q332U6-2</id>
        <name>Long</name>
        <sequence type="described" ref="VSP_019382"/>
    </isoform>
</comment>
<comment type="miscellaneous">
    <text>A longer mRNA that is not produced by splicing has been shown to be transcribed in barley and maize; it can also be predicted for this organism. It is not known if this mRNA is translated.</text>
</comment>
<comment type="similarity">
    <text evidence="2">Belongs to the cytochrome b family. PetD subfamily.</text>
</comment>
<dbReference type="EMBL" id="AP007232">
    <property type="protein sequence ID" value="BAE47626.1"/>
    <property type="status" value="ALT_SEQ"/>
    <property type="molecule type" value="Genomic_DNA"/>
</dbReference>
<dbReference type="EMBL" id="DQ383816">
    <property type="protein sequence ID" value="ABD47263.1"/>
    <property type="molecule type" value="Genomic_DNA"/>
</dbReference>
<dbReference type="RefSeq" id="YP_398359.2">
    <property type="nucleotide sequence ID" value="NC_007578.1"/>
</dbReference>
<dbReference type="SMR" id="Q332U6"/>
<dbReference type="GeneID" id="3772864"/>
<dbReference type="KEGG" id="lsv:3772864"/>
<dbReference type="OrthoDB" id="244at2759"/>
<dbReference type="GO" id="GO:0009535">
    <property type="term" value="C:chloroplast thylakoid membrane"/>
    <property type="evidence" value="ECO:0007669"/>
    <property type="project" value="UniProtKB-SubCell"/>
</dbReference>
<dbReference type="GO" id="GO:0045158">
    <property type="term" value="F:electron transporter, transferring electrons within cytochrome b6/f complex of photosystem II activity"/>
    <property type="evidence" value="ECO:0007669"/>
    <property type="project" value="UniProtKB-UniRule"/>
</dbReference>
<dbReference type="GO" id="GO:0045156">
    <property type="term" value="F:electron transporter, transferring electrons within the cyclic electron transport pathway of photosynthesis activity"/>
    <property type="evidence" value="ECO:0007669"/>
    <property type="project" value="InterPro"/>
</dbReference>
<dbReference type="GO" id="GO:0016491">
    <property type="term" value="F:oxidoreductase activity"/>
    <property type="evidence" value="ECO:0007669"/>
    <property type="project" value="InterPro"/>
</dbReference>
<dbReference type="GO" id="GO:0009767">
    <property type="term" value="P:photosynthetic electron transport chain"/>
    <property type="evidence" value="ECO:0007669"/>
    <property type="project" value="InterPro"/>
</dbReference>
<dbReference type="CDD" id="cd00290">
    <property type="entry name" value="cytochrome_b_C"/>
    <property type="match status" value="1"/>
</dbReference>
<dbReference type="FunFam" id="1.10.287.980:FF:000001">
    <property type="entry name" value="Cytochrome b6-f complex subunit 4"/>
    <property type="match status" value="1"/>
</dbReference>
<dbReference type="FunFam" id="1.20.5.510:FF:000002">
    <property type="entry name" value="Cytochrome b6-f complex subunit 4"/>
    <property type="match status" value="1"/>
</dbReference>
<dbReference type="Gene3D" id="1.10.287.980">
    <property type="entry name" value="plastocyanin oxidoreductase"/>
    <property type="match status" value="1"/>
</dbReference>
<dbReference type="Gene3D" id="1.20.5.510">
    <property type="entry name" value="Single helix bin"/>
    <property type="match status" value="1"/>
</dbReference>
<dbReference type="HAMAP" id="MF_01344">
    <property type="entry name" value="Cytb6_f_subIV"/>
    <property type="match status" value="1"/>
</dbReference>
<dbReference type="InterPro" id="IPR005798">
    <property type="entry name" value="Cyt_b/b6_C"/>
</dbReference>
<dbReference type="InterPro" id="IPR036150">
    <property type="entry name" value="Cyt_b/b6_C_sf"/>
</dbReference>
<dbReference type="InterPro" id="IPR005870">
    <property type="entry name" value="Cyt_b6/f_cplx_suIV"/>
</dbReference>
<dbReference type="InterPro" id="IPR048260">
    <property type="entry name" value="Cytochrome_b_C_euk/bac"/>
</dbReference>
<dbReference type="NCBIfam" id="TIGR01156">
    <property type="entry name" value="cytb6_f_IV"/>
    <property type="match status" value="1"/>
</dbReference>
<dbReference type="PANTHER" id="PTHR19271">
    <property type="entry name" value="CYTOCHROME B"/>
    <property type="match status" value="1"/>
</dbReference>
<dbReference type="PANTHER" id="PTHR19271:SF16">
    <property type="entry name" value="CYTOCHROME B"/>
    <property type="match status" value="1"/>
</dbReference>
<dbReference type="Pfam" id="PF00032">
    <property type="entry name" value="Cytochrom_B_C"/>
    <property type="match status" value="1"/>
</dbReference>
<dbReference type="PIRSF" id="PIRSF000033">
    <property type="entry name" value="B6f_17K"/>
    <property type="match status" value="1"/>
</dbReference>
<dbReference type="SUPFAM" id="SSF81648">
    <property type="entry name" value="a domain/subunit of cytochrome bc1 complex (Ubiquinol-cytochrome c reductase)"/>
    <property type="match status" value="1"/>
</dbReference>
<dbReference type="PROSITE" id="PS51003">
    <property type="entry name" value="CYTB_CTER"/>
    <property type="match status" value="1"/>
</dbReference>
<gene>
    <name evidence="2" type="primary">petD</name>
</gene>
<keyword id="KW-0025">Alternative splicing</keyword>
<keyword id="KW-0150">Chloroplast</keyword>
<keyword id="KW-0249">Electron transport</keyword>
<keyword id="KW-0472">Membrane</keyword>
<keyword id="KW-0602">Photosynthesis</keyword>
<keyword id="KW-0934">Plastid</keyword>
<keyword id="KW-0793">Thylakoid</keyword>
<keyword id="KW-0812">Transmembrane</keyword>
<keyword id="KW-1133">Transmembrane helix</keyword>
<keyword id="KW-0813">Transport</keyword>
<name>PETD_LACSA</name>
<geneLocation type="chloroplast"/>